<feature type="chain" id="PRO_0000165276" description="Terminase A protein">
    <location>
        <begin position="1"/>
        <end position="397"/>
    </location>
</feature>
<feature type="region of interest" description="Disordered" evidence="2">
    <location>
        <begin position="43"/>
        <end position="62"/>
    </location>
</feature>
<feature type="region of interest" description="Disordered" evidence="2">
    <location>
        <begin position="304"/>
        <end position="325"/>
    </location>
</feature>
<feature type="region of interest" description="Disordered" evidence="2">
    <location>
        <begin position="356"/>
        <end position="397"/>
    </location>
</feature>
<feature type="compositionally biased region" description="Basic and acidic residues" evidence="2">
    <location>
        <begin position="43"/>
        <end position="53"/>
    </location>
</feature>
<feature type="compositionally biased region" description="Acidic residues" evidence="2">
    <location>
        <begin position="374"/>
        <end position="387"/>
    </location>
</feature>
<feature type="compositionally biased region" description="Basic and acidic residues" evidence="2">
    <location>
        <begin position="388"/>
        <end position="397"/>
    </location>
</feature>
<evidence type="ECO:0000250" key="1"/>
<evidence type="ECO:0000256" key="2">
    <source>
        <dbReference type="SAM" id="MobiDB-lite"/>
    </source>
</evidence>
<accession>Q5XLR1</accession>
<organismHost>
    <name type="scientific">Escherichia coli</name>
    <dbReference type="NCBI Taxonomy" id="562"/>
</organismHost>
<keyword id="KW-0238">DNA-binding</keyword>
<keyword id="KW-0378">Hydrolase</keyword>
<keyword id="KW-0540">Nuclease</keyword>
<reference key="1">
    <citation type="submission" date="2004-10" db="EMBL/GenBank/DDBJ databases">
        <title>Survey of the pac-c1 region in P1-related phages.</title>
        <authorList>
            <person name="Sauer B.V."/>
            <person name="McDermott J."/>
        </authorList>
    </citation>
    <scope>NUCLEOTIDE SEQUENCE [GENOMIC DNA]</scope>
</reference>
<proteinExistence type="inferred from homology"/>
<sequence>MTWDDHKKNFARLARDGGYTIAQYAAEFNLNPNTARRYLRAFKEDTRTADSRKPNKPVRKPLKSMIIDHSNDQHAGDHIAAEIAEKQRVNAVVSAAVENAKRQNKRINDRSDDHDVINRAHRTLRDRLERDTLDDDGERFEFEAGDYLIDNVEARKAARAMLRRSGADVLETTLLEKSLSHLLMLENARDTCIRLVQEMRDQQKDDDEGTPPEYRIASMLNSCSAQISSLINTIYSIRNNYRKESREAEKHALSMGQAGIVKLAYERKRENNWSVLEAAEFIEAHGGKVPPLMLEQIKADLRAPKTNTDDEENQTASGAPSLEDLDKIARERAASRRADAALWIEHRREEIADIVDTGGYGDVDAEGISNEAWLEQDLDEDEEEDEEVTRKLYGDDD</sequence>
<name>PACA_BPP7</name>
<protein>
    <recommendedName>
        <fullName>Terminase A protein</fullName>
    </recommendedName>
    <alternativeName>
        <fullName>DNA-packaging protein A</fullName>
    </alternativeName>
    <alternativeName>
        <fullName>PACase A protein</fullName>
    </alternativeName>
</protein>
<dbReference type="EMBL" id="AY751747">
    <property type="protein sequence ID" value="AAV28853.1"/>
    <property type="molecule type" value="Genomic_DNA"/>
</dbReference>
<dbReference type="RefSeq" id="YP_009914587.1">
    <property type="nucleotide sequence ID" value="NC_050152.1"/>
</dbReference>
<dbReference type="SMR" id="Q5XLR1"/>
<dbReference type="GeneID" id="58571884"/>
<dbReference type="GO" id="GO:0003677">
    <property type="term" value="F:DNA binding"/>
    <property type="evidence" value="ECO:0007669"/>
    <property type="project" value="UniProtKB-KW"/>
</dbReference>
<dbReference type="GO" id="GO:0004518">
    <property type="term" value="F:nuclease activity"/>
    <property type="evidence" value="ECO:0007669"/>
    <property type="project" value="UniProtKB-KW"/>
</dbReference>
<comment type="function">
    <text evidence="1">Necessary for recognition and cleavage of the phage packaging site (pac), together with the pacB protein. Both are probably the two major subunits of the phage PACase (By similarity).</text>
</comment>
<comment type="subunit">
    <text evidence="1">Multimer of two distinct subunits.</text>
</comment>
<organism>
    <name type="scientific">Enterobacteria phage P7</name>
    <name type="common">Bacteriophage P7</name>
    <dbReference type="NCBI Taxonomy" id="10682"/>
    <lineage>
        <taxon>Viruses</taxon>
        <taxon>Duplodnaviria</taxon>
        <taxon>Heunggongvirae</taxon>
        <taxon>Uroviricota</taxon>
        <taxon>Caudoviricetes</taxon>
        <taxon>Punavirus</taxon>
        <taxon>Punavirus P1</taxon>
    </lineage>
</organism>
<gene>
    <name type="primary">pacA</name>
</gene>